<protein>
    <recommendedName>
        <fullName evidence="1">tRNA U34 carboxymethyltransferase</fullName>
        <ecNumber evidence="1">2.5.1.-</ecNumber>
    </recommendedName>
</protein>
<gene>
    <name evidence="1" type="primary">cmoB</name>
    <name type="ordered locus">Ent638_2439</name>
</gene>
<comment type="function">
    <text evidence="1">Catalyzes carboxymethyl transfer from carboxy-S-adenosyl-L-methionine (Cx-SAM) to 5-hydroxyuridine (ho5U) to form 5-carboxymethoxyuridine (cmo5U) at position 34 in tRNAs.</text>
</comment>
<comment type="catalytic activity">
    <reaction evidence="1">
        <text>carboxy-S-adenosyl-L-methionine + 5-hydroxyuridine(34) in tRNA = 5-carboxymethoxyuridine(34) in tRNA + S-adenosyl-L-homocysteine + H(+)</text>
        <dbReference type="Rhea" id="RHEA:52848"/>
        <dbReference type="Rhea" id="RHEA-COMP:13381"/>
        <dbReference type="Rhea" id="RHEA-COMP:13383"/>
        <dbReference type="ChEBI" id="CHEBI:15378"/>
        <dbReference type="ChEBI" id="CHEBI:57856"/>
        <dbReference type="ChEBI" id="CHEBI:134278"/>
        <dbReference type="ChEBI" id="CHEBI:136877"/>
        <dbReference type="ChEBI" id="CHEBI:136879"/>
    </reaction>
</comment>
<comment type="subunit">
    <text evidence="1">Homotetramer.</text>
</comment>
<comment type="similarity">
    <text evidence="1">Belongs to the class I-like SAM-binding methyltransferase superfamily. CmoB family.</text>
</comment>
<proteinExistence type="inferred from homology"/>
<feature type="chain" id="PRO_1000069329" description="tRNA U34 carboxymethyltransferase">
    <location>
        <begin position="1"/>
        <end position="323"/>
    </location>
</feature>
<feature type="binding site" evidence="1">
    <location>
        <position position="91"/>
    </location>
    <ligand>
        <name>carboxy-S-adenosyl-L-methionine</name>
        <dbReference type="ChEBI" id="CHEBI:134278"/>
    </ligand>
</feature>
<feature type="binding site" evidence="1">
    <location>
        <position position="105"/>
    </location>
    <ligand>
        <name>carboxy-S-adenosyl-L-methionine</name>
        <dbReference type="ChEBI" id="CHEBI:134278"/>
    </ligand>
</feature>
<feature type="binding site" evidence="1">
    <location>
        <position position="110"/>
    </location>
    <ligand>
        <name>carboxy-S-adenosyl-L-methionine</name>
        <dbReference type="ChEBI" id="CHEBI:134278"/>
    </ligand>
</feature>
<feature type="binding site" evidence="1">
    <location>
        <position position="130"/>
    </location>
    <ligand>
        <name>carboxy-S-adenosyl-L-methionine</name>
        <dbReference type="ChEBI" id="CHEBI:134278"/>
    </ligand>
</feature>
<feature type="binding site" evidence="1">
    <location>
        <begin position="181"/>
        <end position="182"/>
    </location>
    <ligand>
        <name>carboxy-S-adenosyl-L-methionine</name>
        <dbReference type="ChEBI" id="CHEBI:134278"/>
    </ligand>
</feature>
<feature type="binding site" evidence="1">
    <location>
        <position position="196"/>
    </location>
    <ligand>
        <name>carboxy-S-adenosyl-L-methionine</name>
        <dbReference type="ChEBI" id="CHEBI:134278"/>
    </ligand>
</feature>
<feature type="binding site" evidence="1">
    <location>
        <position position="200"/>
    </location>
    <ligand>
        <name>carboxy-S-adenosyl-L-methionine</name>
        <dbReference type="ChEBI" id="CHEBI:134278"/>
    </ligand>
</feature>
<feature type="binding site" evidence="1">
    <location>
        <position position="315"/>
    </location>
    <ligand>
        <name>carboxy-S-adenosyl-L-methionine</name>
        <dbReference type="ChEBI" id="CHEBI:134278"/>
    </ligand>
</feature>
<organism>
    <name type="scientific">Enterobacter sp. (strain 638)</name>
    <dbReference type="NCBI Taxonomy" id="399742"/>
    <lineage>
        <taxon>Bacteria</taxon>
        <taxon>Pseudomonadati</taxon>
        <taxon>Pseudomonadota</taxon>
        <taxon>Gammaproteobacteria</taxon>
        <taxon>Enterobacterales</taxon>
        <taxon>Enterobacteriaceae</taxon>
        <taxon>Enterobacter</taxon>
    </lineage>
</organism>
<keyword id="KW-0808">Transferase</keyword>
<keyword id="KW-0819">tRNA processing</keyword>
<evidence type="ECO:0000255" key="1">
    <source>
        <dbReference type="HAMAP-Rule" id="MF_01590"/>
    </source>
</evidence>
<reference key="1">
    <citation type="journal article" date="2010" name="PLoS Genet.">
        <title>Genome sequence of the plant growth promoting endophytic bacterium Enterobacter sp. 638.</title>
        <authorList>
            <person name="Taghavi S."/>
            <person name="van der Lelie D."/>
            <person name="Hoffman A."/>
            <person name="Zhang Y.B."/>
            <person name="Walla M.D."/>
            <person name="Vangronsveld J."/>
            <person name="Newman L."/>
            <person name="Monchy S."/>
        </authorList>
    </citation>
    <scope>NUCLEOTIDE SEQUENCE [LARGE SCALE GENOMIC DNA]</scope>
    <source>
        <strain>638</strain>
    </source>
</reference>
<dbReference type="EC" id="2.5.1.-" evidence="1"/>
<dbReference type="EMBL" id="CP000653">
    <property type="protein sequence ID" value="ABP61108.1"/>
    <property type="molecule type" value="Genomic_DNA"/>
</dbReference>
<dbReference type="RefSeq" id="WP_015959441.1">
    <property type="nucleotide sequence ID" value="NC_009436.1"/>
</dbReference>
<dbReference type="SMR" id="A4WBM8"/>
<dbReference type="STRING" id="399742.Ent638_2439"/>
<dbReference type="KEGG" id="ent:Ent638_2439"/>
<dbReference type="eggNOG" id="COG0500">
    <property type="taxonomic scope" value="Bacteria"/>
</dbReference>
<dbReference type="HOGENOM" id="CLU_052665_0_0_6"/>
<dbReference type="OrthoDB" id="9773188at2"/>
<dbReference type="Proteomes" id="UP000000230">
    <property type="component" value="Chromosome"/>
</dbReference>
<dbReference type="GO" id="GO:0008168">
    <property type="term" value="F:methyltransferase activity"/>
    <property type="evidence" value="ECO:0007669"/>
    <property type="project" value="TreeGrafter"/>
</dbReference>
<dbReference type="GO" id="GO:0016765">
    <property type="term" value="F:transferase activity, transferring alkyl or aryl (other than methyl) groups"/>
    <property type="evidence" value="ECO:0007669"/>
    <property type="project" value="UniProtKB-UniRule"/>
</dbReference>
<dbReference type="GO" id="GO:0002098">
    <property type="term" value="P:tRNA wobble uridine modification"/>
    <property type="evidence" value="ECO:0007669"/>
    <property type="project" value="InterPro"/>
</dbReference>
<dbReference type="CDD" id="cd02440">
    <property type="entry name" value="AdoMet_MTases"/>
    <property type="match status" value="1"/>
</dbReference>
<dbReference type="FunFam" id="3.40.50.150:FF:000080">
    <property type="entry name" value="tRNA U34 carboxymethyltransferase"/>
    <property type="match status" value="1"/>
</dbReference>
<dbReference type="Gene3D" id="3.40.50.150">
    <property type="entry name" value="Vaccinia Virus protein VP39"/>
    <property type="match status" value="1"/>
</dbReference>
<dbReference type="HAMAP" id="MF_01590">
    <property type="entry name" value="tRNA_carboxymethyltr_CmoB"/>
    <property type="match status" value="1"/>
</dbReference>
<dbReference type="InterPro" id="IPR010017">
    <property type="entry name" value="CmoB"/>
</dbReference>
<dbReference type="InterPro" id="IPR027555">
    <property type="entry name" value="Mo5U34_MeTrfas-like"/>
</dbReference>
<dbReference type="InterPro" id="IPR029063">
    <property type="entry name" value="SAM-dependent_MTases_sf"/>
</dbReference>
<dbReference type="NCBIfam" id="NF011650">
    <property type="entry name" value="PRK15068.1"/>
    <property type="match status" value="1"/>
</dbReference>
<dbReference type="NCBIfam" id="TIGR00452">
    <property type="entry name" value="tRNA 5-methoxyuridine(34)/uridine 5-oxyacetic acid(34) synthase CmoB"/>
    <property type="match status" value="1"/>
</dbReference>
<dbReference type="PANTHER" id="PTHR43464">
    <property type="entry name" value="METHYLTRANSFERASE"/>
    <property type="match status" value="1"/>
</dbReference>
<dbReference type="PANTHER" id="PTHR43464:SF95">
    <property type="entry name" value="TRNA U34 CARBOXYMETHYLTRANSFERASE"/>
    <property type="match status" value="1"/>
</dbReference>
<dbReference type="Pfam" id="PF08003">
    <property type="entry name" value="Methyltransf_9"/>
    <property type="match status" value="1"/>
</dbReference>
<dbReference type="SUPFAM" id="SSF53335">
    <property type="entry name" value="S-adenosyl-L-methionine-dependent methyltransferases"/>
    <property type="match status" value="1"/>
</dbReference>
<accession>A4WBM8</accession>
<name>CMOB_ENT38</name>
<sequence>MIEFSNFYQLIAKNHLSHWLETLPAQVAAWQREQLHGKFKQWSNAVEFLPEMTPYKLDLLHSVTAESEEPLSDGQLLRLDKLMRNLMPWRKGPFSLYGLNIDTEWRSDWKWDRVLPHLSDLTGRTILDVGCGSGYHMWRMIGAGAHLAVGIDPMQLFLCQFEAVRKLLGNDQRAHLLPLGIEQLPALAAFDTVFSMGVLYHRRSPLEHLWQLKDQLVNGGELVLETLVIEGDENAVLVPGDRYAQMRNVYFIPSALALKNWLEKCGFVDVRIADVCVTSTEEQRRTEWLTTESLAEFLDPNDSTKTIEGYPAPMRAVLIATKP</sequence>